<proteinExistence type="inferred from homology"/>
<gene>
    <name evidence="1" type="primary">argB</name>
    <name type="ordered locus">P9301_05261</name>
</gene>
<reference key="1">
    <citation type="journal article" date="2007" name="PLoS Genet.">
        <title>Patterns and implications of gene gain and loss in the evolution of Prochlorococcus.</title>
        <authorList>
            <person name="Kettler G.C."/>
            <person name="Martiny A.C."/>
            <person name="Huang K."/>
            <person name="Zucker J."/>
            <person name="Coleman M.L."/>
            <person name="Rodrigue S."/>
            <person name="Chen F."/>
            <person name="Lapidus A."/>
            <person name="Ferriera S."/>
            <person name="Johnson J."/>
            <person name="Steglich C."/>
            <person name="Church G.M."/>
            <person name="Richardson P."/>
            <person name="Chisholm S.W."/>
        </authorList>
    </citation>
    <scope>NUCLEOTIDE SEQUENCE [LARGE SCALE GENOMIC DNA]</scope>
    <source>
        <strain>MIT 9301</strain>
    </source>
</reference>
<sequence>MNDSQRVSILSEALPYIQSFSGRKIVIKYGGSVMEDDDLKNAFFRDIALLSTVGVCPIVIHGGGPEINNWLKKLEISPKFENGLRITDQKTMEIVEMVLMGRVNKQIVKGINKTGSLAVGISGLDGNLIQSRELGDGSHGLVGEVTKINPEILDPLISKGYIPIISSIGSTVEGISHNINADFVAGEIAAAISAEKLILLTDTQGILKEKDNKNSLVEKTNLKEARDLIDKKIVTEGMIPKTECCIRALAQGVKAAHIIDGRVQHSLLLEIFTNTGIGTMIVA</sequence>
<organism>
    <name type="scientific">Prochlorococcus marinus (strain MIT 9301)</name>
    <dbReference type="NCBI Taxonomy" id="167546"/>
    <lineage>
        <taxon>Bacteria</taxon>
        <taxon>Bacillati</taxon>
        <taxon>Cyanobacteriota</taxon>
        <taxon>Cyanophyceae</taxon>
        <taxon>Synechococcales</taxon>
        <taxon>Prochlorococcaceae</taxon>
        <taxon>Prochlorococcus</taxon>
    </lineage>
</organism>
<feature type="chain" id="PRO_1000010524" description="Acetylglutamate kinase">
    <location>
        <begin position="1"/>
        <end position="283"/>
    </location>
</feature>
<feature type="binding site" evidence="1">
    <location>
        <begin position="63"/>
        <end position="64"/>
    </location>
    <ligand>
        <name>substrate</name>
    </ligand>
</feature>
<feature type="binding site" evidence="1">
    <location>
        <position position="85"/>
    </location>
    <ligand>
        <name>substrate</name>
    </ligand>
</feature>
<feature type="binding site" evidence="1">
    <location>
        <position position="178"/>
    </location>
    <ligand>
        <name>substrate</name>
    </ligand>
</feature>
<feature type="site" description="Transition state stabilizer" evidence="1">
    <location>
        <position position="28"/>
    </location>
</feature>
<feature type="site" description="Transition state stabilizer" evidence="1">
    <location>
        <position position="241"/>
    </location>
</feature>
<comment type="function">
    <text evidence="1">Catalyzes the ATP-dependent phosphorylation of N-acetyl-L-glutamate.</text>
</comment>
<comment type="catalytic activity">
    <reaction evidence="1">
        <text>N-acetyl-L-glutamate + ATP = N-acetyl-L-glutamyl 5-phosphate + ADP</text>
        <dbReference type="Rhea" id="RHEA:14629"/>
        <dbReference type="ChEBI" id="CHEBI:30616"/>
        <dbReference type="ChEBI" id="CHEBI:44337"/>
        <dbReference type="ChEBI" id="CHEBI:57936"/>
        <dbReference type="ChEBI" id="CHEBI:456216"/>
        <dbReference type="EC" id="2.7.2.8"/>
    </reaction>
</comment>
<comment type="pathway">
    <text evidence="1">Amino-acid biosynthesis; L-arginine biosynthesis; N(2)-acetyl-L-ornithine from L-glutamate: step 2/4.</text>
</comment>
<comment type="subcellular location">
    <subcellularLocation>
        <location evidence="1">Cytoplasm</location>
    </subcellularLocation>
</comment>
<comment type="similarity">
    <text evidence="1">Belongs to the acetylglutamate kinase family. ArgB subfamily.</text>
</comment>
<protein>
    <recommendedName>
        <fullName evidence="1">Acetylglutamate kinase</fullName>
        <ecNumber evidence="1">2.7.2.8</ecNumber>
    </recommendedName>
    <alternativeName>
        <fullName evidence="1">N-acetyl-L-glutamate 5-phosphotransferase</fullName>
    </alternativeName>
    <alternativeName>
        <fullName evidence="1">NAG kinase</fullName>
        <shortName evidence="1">NAGK</shortName>
    </alternativeName>
</protein>
<keyword id="KW-0028">Amino-acid biosynthesis</keyword>
<keyword id="KW-0055">Arginine biosynthesis</keyword>
<keyword id="KW-0067">ATP-binding</keyword>
<keyword id="KW-0963">Cytoplasm</keyword>
<keyword id="KW-0418">Kinase</keyword>
<keyword id="KW-0547">Nucleotide-binding</keyword>
<keyword id="KW-1185">Reference proteome</keyword>
<keyword id="KW-0808">Transferase</keyword>
<accession>A3PBM4</accession>
<dbReference type="EC" id="2.7.2.8" evidence="1"/>
<dbReference type="EMBL" id="CP000576">
    <property type="protein sequence ID" value="ABO17149.1"/>
    <property type="molecule type" value="Genomic_DNA"/>
</dbReference>
<dbReference type="RefSeq" id="WP_011862519.1">
    <property type="nucleotide sequence ID" value="NC_009091.1"/>
</dbReference>
<dbReference type="SMR" id="A3PBM4"/>
<dbReference type="STRING" id="167546.P9301_05261"/>
<dbReference type="KEGG" id="pmg:P9301_05261"/>
<dbReference type="eggNOG" id="COG0548">
    <property type="taxonomic scope" value="Bacteria"/>
</dbReference>
<dbReference type="HOGENOM" id="CLU_053680_0_0_3"/>
<dbReference type="OrthoDB" id="9803155at2"/>
<dbReference type="UniPathway" id="UPA00068">
    <property type="reaction ID" value="UER00107"/>
</dbReference>
<dbReference type="Proteomes" id="UP000001430">
    <property type="component" value="Chromosome"/>
</dbReference>
<dbReference type="GO" id="GO:0005737">
    <property type="term" value="C:cytoplasm"/>
    <property type="evidence" value="ECO:0007669"/>
    <property type="project" value="UniProtKB-SubCell"/>
</dbReference>
<dbReference type="GO" id="GO:0003991">
    <property type="term" value="F:acetylglutamate kinase activity"/>
    <property type="evidence" value="ECO:0007669"/>
    <property type="project" value="UniProtKB-UniRule"/>
</dbReference>
<dbReference type="GO" id="GO:0005524">
    <property type="term" value="F:ATP binding"/>
    <property type="evidence" value="ECO:0007669"/>
    <property type="project" value="UniProtKB-UniRule"/>
</dbReference>
<dbReference type="GO" id="GO:0042450">
    <property type="term" value="P:arginine biosynthetic process via ornithine"/>
    <property type="evidence" value="ECO:0007669"/>
    <property type="project" value="UniProtKB-UniRule"/>
</dbReference>
<dbReference type="GO" id="GO:0006526">
    <property type="term" value="P:L-arginine biosynthetic process"/>
    <property type="evidence" value="ECO:0007669"/>
    <property type="project" value="UniProtKB-UniPathway"/>
</dbReference>
<dbReference type="CDD" id="cd04250">
    <property type="entry name" value="AAK_NAGK-C"/>
    <property type="match status" value="1"/>
</dbReference>
<dbReference type="FunFam" id="3.40.1160.10:FF:000004">
    <property type="entry name" value="Acetylglutamate kinase"/>
    <property type="match status" value="1"/>
</dbReference>
<dbReference type="Gene3D" id="3.40.1160.10">
    <property type="entry name" value="Acetylglutamate kinase-like"/>
    <property type="match status" value="1"/>
</dbReference>
<dbReference type="HAMAP" id="MF_00082">
    <property type="entry name" value="ArgB"/>
    <property type="match status" value="1"/>
</dbReference>
<dbReference type="InterPro" id="IPR036393">
    <property type="entry name" value="AceGlu_kinase-like_sf"/>
</dbReference>
<dbReference type="InterPro" id="IPR004662">
    <property type="entry name" value="AcgluKinase_fam"/>
</dbReference>
<dbReference type="InterPro" id="IPR037528">
    <property type="entry name" value="ArgB"/>
</dbReference>
<dbReference type="InterPro" id="IPR001048">
    <property type="entry name" value="Asp/Glu/Uridylate_kinase"/>
</dbReference>
<dbReference type="InterPro" id="IPR041727">
    <property type="entry name" value="NAGK-C"/>
</dbReference>
<dbReference type="NCBIfam" id="TIGR00761">
    <property type="entry name" value="argB"/>
    <property type="match status" value="1"/>
</dbReference>
<dbReference type="PANTHER" id="PTHR23342">
    <property type="entry name" value="N-ACETYLGLUTAMATE SYNTHASE"/>
    <property type="match status" value="1"/>
</dbReference>
<dbReference type="PANTHER" id="PTHR23342:SF0">
    <property type="entry name" value="N-ACETYLGLUTAMATE SYNTHASE, MITOCHONDRIAL"/>
    <property type="match status" value="1"/>
</dbReference>
<dbReference type="Pfam" id="PF00696">
    <property type="entry name" value="AA_kinase"/>
    <property type="match status" value="1"/>
</dbReference>
<dbReference type="PIRSF" id="PIRSF000728">
    <property type="entry name" value="NAGK"/>
    <property type="match status" value="1"/>
</dbReference>
<dbReference type="SUPFAM" id="SSF53633">
    <property type="entry name" value="Carbamate kinase-like"/>
    <property type="match status" value="1"/>
</dbReference>
<evidence type="ECO:0000255" key="1">
    <source>
        <dbReference type="HAMAP-Rule" id="MF_00082"/>
    </source>
</evidence>
<name>ARGB_PROM0</name>